<comment type="function">
    <text evidence="1 8">Receptor tyrosine kinase which binds promiscuously transmembrane ephrin-B family ligands residing on adjacent cells, leading to contact-dependent bidirectional signaling into neighboring cells. The signaling pathway downstream of the receptor is referred to as forward signaling while the signaling pathway downstream of the ephrin ligand is referred to as reverse signaling. May play a role in axon guidance during nervous system development. May also play an important redundant role with other ephrin-B receptors in development and maturation of dendritic spines and synapse formation. More generally, may play a role in targeted cell migration and adhesion. Upon activation by ephrin-B ligands activates the MAPK/ERK and the JNK signaling cascades to regulate cell migration and adhesion respectively (By similarity).</text>
</comment>
<comment type="catalytic activity">
    <reaction evidence="7">
        <text>L-tyrosyl-[protein] + ATP = O-phospho-L-tyrosyl-[protein] + ADP + H(+)</text>
        <dbReference type="Rhea" id="RHEA:10596"/>
        <dbReference type="Rhea" id="RHEA-COMP:10136"/>
        <dbReference type="Rhea" id="RHEA-COMP:20101"/>
        <dbReference type="ChEBI" id="CHEBI:15378"/>
        <dbReference type="ChEBI" id="CHEBI:30616"/>
        <dbReference type="ChEBI" id="CHEBI:46858"/>
        <dbReference type="ChEBI" id="CHEBI:61978"/>
        <dbReference type="ChEBI" id="CHEBI:456216"/>
        <dbReference type="EC" id="2.7.10.1"/>
    </reaction>
</comment>
<comment type="subunit">
    <text evidence="1">Heterotetramer upon binding of the ligand. The heterotetramer is composed of an ephrin dimer and a receptor dimer. Oligomerization is probably required to induce biological responses (By similarity).</text>
</comment>
<comment type="subcellular location">
    <subcellularLocation>
        <location evidence="1">Cell membrane</location>
        <topology>Single-pass type I membrane protein</topology>
    </subcellularLocation>
    <subcellularLocation>
        <location evidence="1">Early endosome membrane</location>
        <topology evidence="1">Single-pass type I membrane protein</topology>
    </subcellularLocation>
    <subcellularLocation>
        <location evidence="1">Cell projection</location>
        <location evidence="1">Dendrite</location>
    </subcellularLocation>
</comment>
<comment type="tissue specificity">
    <text>Expressed in the embryo in the brain and spinal cord and in the first and fourth visceral arches. Most abundant in adult brain, with lower levels in eye, heart, ovary, oviduct, lung and pharynx.</text>
</comment>
<comment type="developmental stage">
    <text>Expressed during early development.</text>
</comment>
<comment type="PTM">
    <text evidence="1">Phosphorylated. Autophosphorylation is stimulated by ligands (By similarity).</text>
</comment>
<comment type="similarity">
    <text evidence="3">Belongs to the protein kinase superfamily. Tyr protein kinase family. Ephrin receptor subfamily.</text>
</comment>
<evidence type="ECO:0000250" key="1"/>
<evidence type="ECO:0000255" key="2"/>
<evidence type="ECO:0000255" key="3">
    <source>
        <dbReference type="PROSITE-ProRule" id="PRU00159"/>
    </source>
</evidence>
<evidence type="ECO:0000255" key="4">
    <source>
        <dbReference type="PROSITE-ProRule" id="PRU00184"/>
    </source>
</evidence>
<evidence type="ECO:0000255" key="5">
    <source>
        <dbReference type="PROSITE-ProRule" id="PRU00316"/>
    </source>
</evidence>
<evidence type="ECO:0000255" key="6">
    <source>
        <dbReference type="PROSITE-ProRule" id="PRU00883"/>
    </source>
</evidence>
<evidence type="ECO:0000255" key="7">
    <source>
        <dbReference type="PROSITE-ProRule" id="PRU10028"/>
    </source>
</evidence>
<evidence type="ECO:0000269" key="8">
    <source>
    </source>
</evidence>
<reference key="1">
    <citation type="journal article" date="1995" name="Oncogene">
        <title>Novel members of the eph receptor tyrosine kinase subfamily expressed during Xenopus development.</title>
        <authorList>
            <person name="Scales J.B."/>
            <person name="Winning R.S."/>
            <person name="Renaud C.S."/>
            <person name="Shea L.J."/>
            <person name="Sargent T.D."/>
        </authorList>
    </citation>
    <scope>NUCLEOTIDE SEQUENCE [MRNA]</scope>
</reference>
<reference key="2">
    <citation type="journal article" date="1997" name="Curr. Biol.">
        <title>The EphA4 and EphB1 receptor tyrosine kinases and ephrin-B2 ligand regulate targeted migration of branchial neural crest cells.</title>
        <authorList>
            <person name="Smith A."/>
            <person name="Robinson V."/>
            <person name="Patel K."/>
            <person name="Wilkinson D.G."/>
        </authorList>
    </citation>
    <scope>FUNCTION IN TARGETED CELL MIGRATION</scope>
</reference>
<sequence>HRVYVEMRFTVRDCSSLPNVPGSCKETFNLYYYETDSNIDNKISTFWNESPYLKVDTIAADESFSQVDFGGRLMKVNTEVRSFGPLTRSGFYLAFQDYGACMSLLSVRVFFKKCPSVVQNFAVFPETMTGAESTSLVIARGTCIPNAEEVDVPIKLYCNGDGEWMVPIGKCTCKAGYEPENHVVCKACPAAMFKANQGMGICAQCPANSRSTSEASPICICRNGYYRADFDTPEAPCTSVPSGPRNVISIVNETAITLEWHPPRETGGRDDVNYNIICKKCQSDRRGCSHCDDNVDFVPRQLGLTDTRVFISNLWVHTPYTFEIQAVNGVTNKSPFPPQHVSVNITTNQAAPSSVPIMHQVKATMKSITLSWPQPEQPNGIILDYEIRYYEKDHHEFNSSLARSQTNTASIEGLRPGVVYVVQVRARTVAGYGKFSSKMCFQTLTEEDYKSELREQLPLIAGSAAAGVVFIVSLVAISIVCSRKRTYSKEAVYSDKLQHYSTGRGSPGMKIYIDPFTYEDPNEAVREFAKEIDVSFVKIEEVIGAGEFGEVYKGRLKLPSKREISVAIKTLKAGYSEKQRRDFLSEASIMGQFDHPNIIRLEGVVTKSRPVMIITEFMENGALDSFLRQNDGQFTVIQLVGMLRGIAAGMKYLSEMNYVHRDLAARNILVNSNLVCKVSDFGLSRYLQDDTSDPTYTSSLGGKIPVRWTAPEAIRYRKFTSASDVWSYGIVMWEVMSYGERPYWDMSNQDVINAIEQDYRLPPPMDCPAALHQLMLDCWQKDRNSRPRFGEIVNTLDKMIRNPASLKTVATIPAVPSQPLLDRSIPDISAFTSVDDWLSAIKMGQYRDNFLSSGFTSLHVVAQMTSEDLLRIGITLAGHQKKILNSIQSMRVQISQSPTSIA</sequence>
<dbReference type="EC" id="2.7.10.1"/>
<dbReference type="EMBL" id="L43621">
    <property type="protein sequence ID" value="AAA93527.1"/>
    <property type="molecule type" value="mRNA"/>
</dbReference>
<dbReference type="SMR" id="Q91736"/>
<dbReference type="GlyCosmos" id="Q91736">
    <property type="glycosylation" value="3 sites, No reported glycans"/>
</dbReference>
<dbReference type="AGR" id="Xenbase:XB-GENE-865799"/>
<dbReference type="Xenbase" id="XB-GENE-865799">
    <property type="gene designation" value="ephb1.S"/>
</dbReference>
<dbReference type="Proteomes" id="UP000186698">
    <property type="component" value="Unplaced"/>
</dbReference>
<dbReference type="GO" id="GO:0030425">
    <property type="term" value="C:dendrite"/>
    <property type="evidence" value="ECO:0000318"/>
    <property type="project" value="GO_Central"/>
</dbReference>
<dbReference type="GO" id="GO:0031901">
    <property type="term" value="C:early endosome membrane"/>
    <property type="evidence" value="ECO:0000250"/>
    <property type="project" value="UniProtKB"/>
</dbReference>
<dbReference type="GO" id="GO:0005886">
    <property type="term" value="C:plasma membrane"/>
    <property type="evidence" value="ECO:0000250"/>
    <property type="project" value="UniProtKB"/>
</dbReference>
<dbReference type="GO" id="GO:0005524">
    <property type="term" value="F:ATP binding"/>
    <property type="evidence" value="ECO:0007669"/>
    <property type="project" value="UniProtKB-KW"/>
</dbReference>
<dbReference type="GO" id="GO:0005005">
    <property type="term" value="F:transmembrane-ephrin receptor activity"/>
    <property type="evidence" value="ECO:0000250"/>
    <property type="project" value="UniProtKB"/>
</dbReference>
<dbReference type="GO" id="GO:0007411">
    <property type="term" value="P:axon guidance"/>
    <property type="evidence" value="ECO:0000250"/>
    <property type="project" value="UniProtKB"/>
</dbReference>
<dbReference type="GO" id="GO:0060326">
    <property type="term" value="P:cell chemotaxis"/>
    <property type="evidence" value="ECO:0000250"/>
    <property type="project" value="UniProtKB"/>
</dbReference>
<dbReference type="GO" id="GO:0031589">
    <property type="term" value="P:cell-substrate adhesion"/>
    <property type="evidence" value="ECO:0000250"/>
    <property type="project" value="UniProtKB"/>
</dbReference>
<dbReference type="GO" id="GO:0060996">
    <property type="term" value="P:dendritic spine development"/>
    <property type="evidence" value="ECO:0000250"/>
    <property type="project" value="UniProtKB"/>
</dbReference>
<dbReference type="GO" id="GO:0060997">
    <property type="term" value="P:dendritic spine morphogenesis"/>
    <property type="evidence" value="ECO:0000250"/>
    <property type="project" value="UniProtKB"/>
</dbReference>
<dbReference type="GO" id="GO:0048013">
    <property type="term" value="P:ephrin receptor signaling pathway"/>
    <property type="evidence" value="ECO:0000250"/>
    <property type="project" value="UniProtKB"/>
</dbReference>
<dbReference type="GO" id="GO:0030010">
    <property type="term" value="P:establishment of cell polarity"/>
    <property type="evidence" value="ECO:0000250"/>
    <property type="project" value="UniProtKB"/>
</dbReference>
<dbReference type="GO" id="GO:0051965">
    <property type="term" value="P:positive regulation of synapse assembly"/>
    <property type="evidence" value="ECO:0000250"/>
    <property type="project" value="UniProtKB"/>
</dbReference>
<dbReference type="GO" id="GO:0046777">
    <property type="term" value="P:protein autophosphorylation"/>
    <property type="evidence" value="ECO:0000250"/>
    <property type="project" value="UniProtKB"/>
</dbReference>
<dbReference type="GO" id="GO:0070372">
    <property type="term" value="P:regulation of ERK1 and ERK2 cascade"/>
    <property type="evidence" value="ECO:0000250"/>
    <property type="project" value="UniProtKB"/>
</dbReference>
<dbReference type="GO" id="GO:0046328">
    <property type="term" value="P:regulation of JNK cascade"/>
    <property type="evidence" value="ECO:0000250"/>
    <property type="project" value="UniProtKB"/>
</dbReference>
<dbReference type="CDD" id="cd00063">
    <property type="entry name" value="FN3"/>
    <property type="match status" value="2"/>
</dbReference>
<dbReference type="CDD" id="cd05065">
    <property type="entry name" value="PTKc_EphR_B"/>
    <property type="match status" value="1"/>
</dbReference>
<dbReference type="CDD" id="cd09551">
    <property type="entry name" value="SAM_EPH-B1"/>
    <property type="match status" value="1"/>
</dbReference>
<dbReference type="FunFam" id="2.60.40.10:FF:000041">
    <property type="entry name" value="ephrin type-A receptor 3"/>
    <property type="match status" value="1"/>
</dbReference>
<dbReference type="FunFam" id="1.10.150.50:FF:000001">
    <property type="entry name" value="Ephrin type-A receptor 5"/>
    <property type="match status" value="1"/>
</dbReference>
<dbReference type="FunFam" id="2.10.50.10:FF:000001">
    <property type="entry name" value="Ephrin type-A receptor 5"/>
    <property type="match status" value="1"/>
</dbReference>
<dbReference type="FunFam" id="2.60.40.1770:FF:000001">
    <property type="entry name" value="Ephrin type-A receptor 5"/>
    <property type="match status" value="1"/>
</dbReference>
<dbReference type="FunFam" id="3.30.200.20:FF:000001">
    <property type="entry name" value="Ephrin type-A receptor 5"/>
    <property type="match status" value="1"/>
</dbReference>
<dbReference type="FunFam" id="1.10.510.10:FF:000015">
    <property type="entry name" value="Ephrin type-B receptor 2"/>
    <property type="match status" value="1"/>
</dbReference>
<dbReference type="FunFam" id="2.60.40.10:FF:000110">
    <property type="entry name" value="Ephrin type-B receptor 2"/>
    <property type="match status" value="1"/>
</dbReference>
<dbReference type="Gene3D" id="2.60.40.1770">
    <property type="entry name" value="ephrin a2 ectodomain"/>
    <property type="match status" value="1"/>
</dbReference>
<dbReference type="Gene3D" id="2.60.120.260">
    <property type="entry name" value="Galactose-binding domain-like"/>
    <property type="match status" value="1"/>
</dbReference>
<dbReference type="Gene3D" id="2.60.40.10">
    <property type="entry name" value="Immunoglobulins"/>
    <property type="match status" value="2"/>
</dbReference>
<dbReference type="Gene3D" id="3.30.200.20">
    <property type="entry name" value="Phosphorylase Kinase, domain 1"/>
    <property type="match status" value="1"/>
</dbReference>
<dbReference type="Gene3D" id="1.10.150.50">
    <property type="entry name" value="Transcription Factor, Ets-1"/>
    <property type="match status" value="1"/>
</dbReference>
<dbReference type="Gene3D" id="1.10.510.10">
    <property type="entry name" value="Transferase(Phosphotransferase) domain 1"/>
    <property type="match status" value="1"/>
</dbReference>
<dbReference type="Gene3D" id="2.10.50.10">
    <property type="entry name" value="Tumor Necrosis Factor Receptor, subunit A, domain 2"/>
    <property type="match status" value="1"/>
</dbReference>
<dbReference type="InterPro" id="IPR027936">
    <property type="entry name" value="Eph_TM"/>
</dbReference>
<dbReference type="InterPro" id="IPR042819">
    <property type="entry name" value="EphB1_SAM"/>
</dbReference>
<dbReference type="InterPro" id="IPR001090">
    <property type="entry name" value="Ephrin_rcpt_lig-bd_dom"/>
</dbReference>
<dbReference type="InterPro" id="IPR050449">
    <property type="entry name" value="Ephrin_rcpt_TKs"/>
</dbReference>
<dbReference type="InterPro" id="IPR003961">
    <property type="entry name" value="FN3_dom"/>
</dbReference>
<dbReference type="InterPro" id="IPR036116">
    <property type="entry name" value="FN3_sf"/>
</dbReference>
<dbReference type="InterPro" id="IPR008979">
    <property type="entry name" value="Galactose-bd-like_sf"/>
</dbReference>
<dbReference type="InterPro" id="IPR009030">
    <property type="entry name" value="Growth_fac_rcpt_cys_sf"/>
</dbReference>
<dbReference type="InterPro" id="IPR013783">
    <property type="entry name" value="Ig-like_fold"/>
</dbReference>
<dbReference type="InterPro" id="IPR011009">
    <property type="entry name" value="Kinase-like_dom_sf"/>
</dbReference>
<dbReference type="InterPro" id="IPR000719">
    <property type="entry name" value="Prot_kinase_dom"/>
</dbReference>
<dbReference type="InterPro" id="IPR017441">
    <property type="entry name" value="Protein_kinase_ATP_BS"/>
</dbReference>
<dbReference type="InterPro" id="IPR001660">
    <property type="entry name" value="SAM"/>
</dbReference>
<dbReference type="InterPro" id="IPR013761">
    <property type="entry name" value="SAM/pointed_sf"/>
</dbReference>
<dbReference type="InterPro" id="IPR001245">
    <property type="entry name" value="Ser-Thr/Tyr_kinase_cat_dom"/>
</dbReference>
<dbReference type="InterPro" id="IPR008266">
    <property type="entry name" value="Tyr_kinase_AS"/>
</dbReference>
<dbReference type="InterPro" id="IPR020635">
    <property type="entry name" value="Tyr_kinase_cat_dom"/>
</dbReference>
<dbReference type="InterPro" id="IPR016257">
    <property type="entry name" value="Tyr_kinase_ephrin_rcpt"/>
</dbReference>
<dbReference type="InterPro" id="IPR001426">
    <property type="entry name" value="Tyr_kinase_rcpt_V_CS"/>
</dbReference>
<dbReference type="PANTHER" id="PTHR46877">
    <property type="entry name" value="EPH RECEPTOR A5"/>
    <property type="match status" value="1"/>
</dbReference>
<dbReference type="PANTHER" id="PTHR46877:SF17">
    <property type="entry name" value="EPHRIN TYPE-B RECEPTOR 1"/>
    <property type="match status" value="1"/>
</dbReference>
<dbReference type="Pfam" id="PF14575">
    <property type="entry name" value="EphA2_TM"/>
    <property type="match status" value="1"/>
</dbReference>
<dbReference type="Pfam" id="PF01404">
    <property type="entry name" value="Ephrin_lbd"/>
    <property type="match status" value="1"/>
</dbReference>
<dbReference type="Pfam" id="PF00041">
    <property type="entry name" value="fn3"/>
    <property type="match status" value="2"/>
</dbReference>
<dbReference type="Pfam" id="PF07714">
    <property type="entry name" value="PK_Tyr_Ser-Thr"/>
    <property type="match status" value="1"/>
</dbReference>
<dbReference type="Pfam" id="PF00536">
    <property type="entry name" value="SAM_1"/>
    <property type="match status" value="1"/>
</dbReference>
<dbReference type="PIRSF" id="PIRSF000666">
    <property type="entry name" value="TyrPK_ephrin_receptor"/>
    <property type="match status" value="1"/>
</dbReference>
<dbReference type="PRINTS" id="PR00014">
    <property type="entry name" value="FNTYPEIII"/>
</dbReference>
<dbReference type="PRINTS" id="PR00109">
    <property type="entry name" value="TYRKINASE"/>
</dbReference>
<dbReference type="SMART" id="SM00615">
    <property type="entry name" value="EPH_lbd"/>
    <property type="match status" value="1"/>
</dbReference>
<dbReference type="SMART" id="SM01411">
    <property type="entry name" value="Ephrin_rec_like"/>
    <property type="match status" value="1"/>
</dbReference>
<dbReference type="SMART" id="SM00060">
    <property type="entry name" value="FN3"/>
    <property type="match status" value="2"/>
</dbReference>
<dbReference type="SMART" id="SM00454">
    <property type="entry name" value="SAM"/>
    <property type="match status" value="1"/>
</dbReference>
<dbReference type="SMART" id="SM00219">
    <property type="entry name" value="TyrKc"/>
    <property type="match status" value="1"/>
</dbReference>
<dbReference type="SUPFAM" id="SSF49265">
    <property type="entry name" value="Fibronectin type III"/>
    <property type="match status" value="1"/>
</dbReference>
<dbReference type="SUPFAM" id="SSF49785">
    <property type="entry name" value="Galactose-binding domain-like"/>
    <property type="match status" value="1"/>
</dbReference>
<dbReference type="SUPFAM" id="SSF57184">
    <property type="entry name" value="Growth factor receptor domain"/>
    <property type="match status" value="1"/>
</dbReference>
<dbReference type="SUPFAM" id="SSF56112">
    <property type="entry name" value="Protein kinase-like (PK-like)"/>
    <property type="match status" value="1"/>
</dbReference>
<dbReference type="SUPFAM" id="SSF47769">
    <property type="entry name" value="SAM/Pointed domain"/>
    <property type="match status" value="1"/>
</dbReference>
<dbReference type="PROSITE" id="PS01186">
    <property type="entry name" value="EGF_2"/>
    <property type="match status" value="1"/>
</dbReference>
<dbReference type="PROSITE" id="PS51550">
    <property type="entry name" value="EPH_LBD"/>
    <property type="match status" value="1"/>
</dbReference>
<dbReference type="PROSITE" id="PS50853">
    <property type="entry name" value="FN3"/>
    <property type="match status" value="2"/>
</dbReference>
<dbReference type="PROSITE" id="PS00107">
    <property type="entry name" value="PROTEIN_KINASE_ATP"/>
    <property type="match status" value="1"/>
</dbReference>
<dbReference type="PROSITE" id="PS50011">
    <property type="entry name" value="PROTEIN_KINASE_DOM"/>
    <property type="match status" value="1"/>
</dbReference>
<dbReference type="PROSITE" id="PS00109">
    <property type="entry name" value="PROTEIN_KINASE_TYR"/>
    <property type="match status" value="1"/>
</dbReference>
<dbReference type="PROSITE" id="PS00790">
    <property type="entry name" value="RECEPTOR_TYR_KIN_V_1"/>
    <property type="match status" value="1"/>
</dbReference>
<dbReference type="PROSITE" id="PS00791">
    <property type="entry name" value="RECEPTOR_TYR_KIN_V_2"/>
    <property type="match status" value="1"/>
</dbReference>
<dbReference type="PROSITE" id="PS50105">
    <property type="entry name" value="SAM_DOMAIN"/>
    <property type="match status" value="1"/>
</dbReference>
<gene>
    <name type="primary">ephb1-b</name>
    <name type="synonym">xelk</name>
</gene>
<proteinExistence type="evidence at protein level"/>
<feature type="chain" id="PRO_0000160275" description="Ephrin type-B receptor 1-B">
    <location>
        <begin position="1" status="less than"/>
        <end position="902"/>
    </location>
</feature>
<feature type="topological domain" description="Extracellular" evidence="2">
    <location>
        <begin position="1" status="less than"/>
        <end position="459"/>
    </location>
</feature>
<feature type="transmembrane region" description="Helical" evidence="2">
    <location>
        <begin position="460"/>
        <end position="480"/>
    </location>
</feature>
<feature type="topological domain" description="Cytoplasmic" evidence="2">
    <location>
        <begin position="481"/>
        <end position="902"/>
    </location>
</feature>
<feature type="domain" description="Eph LBD" evidence="6">
    <location>
        <begin position="1"/>
        <end position="119"/>
    </location>
</feature>
<feature type="domain" description="Fibronectin type-III 1" evidence="5">
    <location>
        <begin position="240"/>
        <end position="350"/>
    </location>
</feature>
<feature type="domain" description="Fibronectin type-III 2" evidence="5">
    <location>
        <begin position="351"/>
        <end position="448"/>
    </location>
</feature>
<feature type="domain" description="Protein kinase" evidence="3">
    <location>
        <begin position="537"/>
        <end position="800"/>
    </location>
</feature>
<feature type="domain" description="SAM" evidence="4">
    <location>
        <begin position="829"/>
        <end position="893"/>
    </location>
</feature>
<feature type="short sequence motif" description="PDZ-binding" evidence="2">
    <location>
        <begin position="900"/>
        <end position="902"/>
    </location>
</feature>
<feature type="active site" description="Proton acceptor" evidence="3 7">
    <location>
        <position position="662"/>
    </location>
</feature>
<feature type="binding site" evidence="3">
    <location>
        <begin position="543"/>
        <end position="551"/>
    </location>
    <ligand>
        <name>ATP</name>
        <dbReference type="ChEBI" id="CHEBI:30616"/>
    </ligand>
</feature>
<feature type="binding site" evidence="3">
    <location>
        <position position="569"/>
    </location>
    <ligand>
        <name>ATP</name>
        <dbReference type="ChEBI" id="CHEBI:30616"/>
    </ligand>
</feature>
<feature type="glycosylation site" description="N-linked (GlcNAc...) asparagine" evidence="2">
    <location>
        <position position="252"/>
    </location>
</feature>
<feature type="glycosylation site" description="N-linked (GlcNAc...) asparagine" evidence="2">
    <location>
        <position position="344"/>
    </location>
</feature>
<feature type="glycosylation site" description="N-linked (GlcNAc...) asparagine" evidence="2">
    <location>
        <position position="398"/>
    </location>
</feature>
<feature type="non-terminal residue">
    <location>
        <position position="1"/>
    </location>
</feature>
<protein>
    <recommendedName>
        <fullName>Ephrin type-B receptor 1-B</fullName>
        <ecNumber>2.7.10.1</ecNumber>
    </recommendedName>
    <alternativeName>
        <fullName>Tyrosine-protein kinase receptor XELK</fullName>
    </alternativeName>
</protein>
<name>EPB1B_XENLA</name>
<organism>
    <name type="scientific">Xenopus laevis</name>
    <name type="common">African clawed frog</name>
    <dbReference type="NCBI Taxonomy" id="8355"/>
    <lineage>
        <taxon>Eukaryota</taxon>
        <taxon>Metazoa</taxon>
        <taxon>Chordata</taxon>
        <taxon>Craniata</taxon>
        <taxon>Vertebrata</taxon>
        <taxon>Euteleostomi</taxon>
        <taxon>Amphibia</taxon>
        <taxon>Batrachia</taxon>
        <taxon>Anura</taxon>
        <taxon>Pipoidea</taxon>
        <taxon>Pipidae</taxon>
        <taxon>Xenopodinae</taxon>
        <taxon>Xenopus</taxon>
        <taxon>Xenopus</taxon>
    </lineage>
</organism>
<keyword id="KW-0067">ATP-binding</keyword>
<keyword id="KW-0130">Cell adhesion</keyword>
<keyword id="KW-1003">Cell membrane</keyword>
<keyword id="KW-0966">Cell projection</keyword>
<keyword id="KW-0967">Endosome</keyword>
<keyword id="KW-0325">Glycoprotein</keyword>
<keyword id="KW-0418">Kinase</keyword>
<keyword id="KW-0472">Membrane</keyword>
<keyword id="KW-0524">Neurogenesis</keyword>
<keyword id="KW-0547">Nucleotide-binding</keyword>
<keyword id="KW-0597">Phosphoprotein</keyword>
<keyword id="KW-0675">Receptor</keyword>
<keyword id="KW-1185">Reference proteome</keyword>
<keyword id="KW-0677">Repeat</keyword>
<keyword id="KW-0808">Transferase</keyword>
<keyword id="KW-0812">Transmembrane</keyword>
<keyword id="KW-1133">Transmembrane helix</keyword>
<keyword id="KW-0829">Tyrosine-protein kinase</keyword>
<accession>Q91736</accession>